<keyword id="KW-0963">Cytoplasm</keyword>
<keyword id="KW-0210">Decarboxylase</keyword>
<keyword id="KW-0456">Lyase</keyword>
<keyword id="KW-0627">Porphyrin biosynthesis</keyword>
<keyword id="KW-1185">Reference proteome</keyword>
<proteinExistence type="inferred from homology"/>
<name>DCUP_RUEPO</name>
<sequence length="344" mass="37094">MAETKKLLRVLAGEVLDTPPIWMMRQAGRYLPEYRATRAQAGDFLSLCYNPELAAEVTLQPIRRYGFDAAILFADILLVPQALGADLWFETGEGPRLSTIGAQADFDRLKPVDAIHETLSPIYETVRILTRELPSETALIGFAGAPWTVATYMIAGRGTPDQGPAHALREGNPALFDALIARLTAATIEYLSAQIEAGAEVVKIFDSWAGSLKGEAFTKYALEPCREITQALKARHPGIPVIGFPREAGQGYVGFAKATGVDCVALDNSVTPDWAAAHVQVDGCVQGNLASSHMVTGGQALVDETRRIVEAFSKGPHIFNLGHGITPDADPENVQLMIDTVRKG</sequence>
<dbReference type="EC" id="4.1.1.37" evidence="1"/>
<dbReference type="EMBL" id="CP000031">
    <property type="protein sequence ID" value="AAV96871.1"/>
    <property type="molecule type" value="Genomic_DNA"/>
</dbReference>
<dbReference type="RefSeq" id="WP_011049328.1">
    <property type="nucleotide sequence ID" value="NC_003911.12"/>
</dbReference>
<dbReference type="SMR" id="Q5LMB5"/>
<dbReference type="STRING" id="246200.SPO3648"/>
<dbReference type="PaxDb" id="246200-SPO3648"/>
<dbReference type="KEGG" id="sil:SPO3648"/>
<dbReference type="eggNOG" id="COG0407">
    <property type="taxonomic scope" value="Bacteria"/>
</dbReference>
<dbReference type="HOGENOM" id="CLU_040933_0_0_5"/>
<dbReference type="OrthoDB" id="9806656at2"/>
<dbReference type="UniPathway" id="UPA00251">
    <property type="reaction ID" value="UER00321"/>
</dbReference>
<dbReference type="Proteomes" id="UP000001023">
    <property type="component" value="Chromosome"/>
</dbReference>
<dbReference type="GO" id="GO:0005829">
    <property type="term" value="C:cytosol"/>
    <property type="evidence" value="ECO:0007669"/>
    <property type="project" value="TreeGrafter"/>
</dbReference>
<dbReference type="GO" id="GO:0004853">
    <property type="term" value="F:uroporphyrinogen decarboxylase activity"/>
    <property type="evidence" value="ECO:0007669"/>
    <property type="project" value="UniProtKB-UniRule"/>
</dbReference>
<dbReference type="GO" id="GO:0019353">
    <property type="term" value="P:protoporphyrinogen IX biosynthetic process from glutamate"/>
    <property type="evidence" value="ECO:0007669"/>
    <property type="project" value="TreeGrafter"/>
</dbReference>
<dbReference type="CDD" id="cd00717">
    <property type="entry name" value="URO-D"/>
    <property type="match status" value="1"/>
</dbReference>
<dbReference type="Gene3D" id="3.20.20.210">
    <property type="match status" value="1"/>
</dbReference>
<dbReference type="HAMAP" id="MF_00218">
    <property type="entry name" value="URO_D"/>
    <property type="match status" value="1"/>
</dbReference>
<dbReference type="InterPro" id="IPR038071">
    <property type="entry name" value="UROD/MetE-like_sf"/>
</dbReference>
<dbReference type="InterPro" id="IPR006361">
    <property type="entry name" value="Uroporphyrinogen_deCO2ase_HemE"/>
</dbReference>
<dbReference type="InterPro" id="IPR000257">
    <property type="entry name" value="Uroporphyrinogen_deCOase"/>
</dbReference>
<dbReference type="NCBIfam" id="TIGR01464">
    <property type="entry name" value="hemE"/>
    <property type="match status" value="1"/>
</dbReference>
<dbReference type="PANTHER" id="PTHR21091">
    <property type="entry name" value="METHYLTETRAHYDROFOLATE:HOMOCYSTEINE METHYLTRANSFERASE RELATED"/>
    <property type="match status" value="1"/>
</dbReference>
<dbReference type="PANTHER" id="PTHR21091:SF169">
    <property type="entry name" value="UROPORPHYRINOGEN DECARBOXYLASE"/>
    <property type="match status" value="1"/>
</dbReference>
<dbReference type="Pfam" id="PF01208">
    <property type="entry name" value="URO-D"/>
    <property type="match status" value="1"/>
</dbReference>
<dbReference type="SUPFAM" id="SSF51726">
    <property type="entry name" value="UROD/MetE-like"/>
    <property type="match status" value="1"/>
</dbReference>
<dbReference type="PROSITE" id="PS00906">
    <property type="entry name" value="UROD_1"/>
    <property type="match status" value="1"/>
</dbReference>
<dbReference type="PROSITE" id="PS00907">
    <property type="entry name" value="UROD_2"/>
    <property type="match status" value="1"/>
</dbReference>
<comment type="function">
    <text evidence="1">Catalyzes the decarboxylation of four acetate groups of uroporphyrinogen-III to yield coproporphyrinogen-III.</text>
</comment>
<comment type="catalytic activity">
    <reaction evidence="1">
        <text>uroporphyrinogen III + 4 H(+) = coproporphyrinogen III + 4 CO2</text>
        <dbReference type="Rhea" id="RHEA:19865"/>
        <dbReference type="ChEBI" id="CHEBI:15378"/>
        <dbReference type="ChEBI" id="CHEBI:16526"/>
        <dbReference type="ChEBI" id="CHEBI:57308"/>
        <dbReference type="ChEBI" id="CHEBI:57309"/>
        <dbReference type="EC" id="4.1.1.37"/>
    </reaction>
</comment>
<comment type="pathway">
    <text evidence="1">Porphyrin-containing compound metabolism; protoporphyrin-IX biosynthesis; coproporphyrinogen-III from 5-aminolevulinate: step 4/4.</text>
</comment>
<comment type="subunit">
    <text evidence="1">Homodimer.</text>
</comment>
<comment type="subcellular location">
    <subcellularLocation>
        <location evidence="1">Cytoplasm</location>
    </subcellularLocation>
</comment>
<comment type="similarity">
    <text evidence="1">Belongs to the uroporphyrinogen decarboxylase family.</text>
</comment>
<evidence type="ECO:0000255" key="1">
    <source>
        <dbReference type="HAMAP-Rule" id="MF_00218"/>
    </source>
</evidence>
<feature type="chain" id="PRO_0000325693" description="Uroporphyrinogen decarboxylase">
    <location>
        <begin position="1"/>
        <end position="344"/>
    </location>
</feature>
<feature type="binding site" evidence="1">
    <location>
        <begin position="25"/>
        <end position="29"/>
    </location>
    <ligand>
        <name>substrate</name>
    </ligand>
</feature>
<feature type="binding site" evidence="1">
    <location>
        <position position="75"/>
    </location>
    <ligand>
        <name>substrate</name>
    </ligand>
</feature>
<feature type="binding site" evidence="1">
    <location>
        <position position="152"/>
    </location>
    <ligand>
        <name>substrate</name>
    </ligand>
</feature>
<feature type="binding site" evidence="1">
    <location>
        <position position="207"/>
    </location>
    <ligand>
        <name>substrate</name>
    </ligand>
</feature>
<feature type="binding site" evidence="1">
    <location>
        <position position="323"/>
    </location>
    <ligand>
        <name>substrate</name>
    </ligand>
</feature>
<feature type="site" description="Transition state stabilizer" evidence="1">
    <location>
        <position position="75"/>
    </location>
</feature>
<accession>Q5LMB5</accession>
<gene>
    <name evidence="1" type="primary">hemE</name>
    <name type="ordered locus">SPO3648</name>
</gene>
<reference key="1">
    <citation type="journal article" date="2004" name="Nature">
        <title>Genome sequence of Silicibacter pomeroyi reveals adaptations to the marine environment.</title>
        <authorList>
            <person name="Moran M.A."/>
            <person name="Buchan A."/>
            <person name="Gonzalez J.M."/>
            <person name="Heidelberg J.F."/>
            <person name="Whitman W.B."/>
            <person name="Kiene R.P."/>
            <person name="Henriksen J.R."/>
            <person name="King G.M."/>
            <person name="Belas R."/>
            <person name="Fuqua C."/>
            <person name="Brinkac L.M."/>
            <person name="Lewis M."/>
            <person name="Johri S."/>
            <person name="Weaver B."/>
            <person name="Pai G."/>
            <person name="Eisen J.A."/>
            <person name="Rahe E."/>
            <person name="Sheldon W.M."/>
            <person name="Ye W."/>
            <person name="Miller T.R."/>
            <person name="Carlton J."/>
            <person name="Rasko D.A."/>
            <person name="Paulsen I.T."/>
            <person name="Ren Q."/>
            <person name="Daugherty S.C."/>
            <person name="DeBoy R.T."/>
            <person name="Dodson R.J."/>
            <person name="Durkin A.S."/>
            <person name="Madupu R."/>
            <person name="Nelson W.C."/>
            <person name="Sullivan S.A."/>
            <person name="Rosovitz M.J."/>
            <person name="Haft D.H."/>
            <person name="Selengut J."/>
            <person name="Ward N."/>
        </authorList>
    </citation>
    <scope>NUCLEOTIDE SEQUENCE [LARGE SCALE GENOMIC DNA]</scope>
    <source>
        <strain>ATCC 700808 / DSM 15171 / DSS-3</strain>
    </source>
</reference>
<reference key="2">
    <citation type="journal article" date="2014" name="Stand. Genomic Sci.">
        <title>An updated genome annotation for the model marine bacterium Ruegeria pomeroyi DSS-3.</title>
        <authorList>
            <person name="Rivers A.R."/>
            <person name="Smith C.B."/>
            <person name="Moran M.A."/>
        </authorList>
    </citation>
    <scope>GENOME REANNOTATION</scope>
    <source>
        <strain>ATCC 700808 / DSM 15171 / DSS-3</strain>
    </source>
</reference>
<protein>
    <recommendedName>
        <fullName evidence="1">Uroporphyrinogen decarboxylase</fullName>
        <shortName evidence="1">UPD</shortName>
        <shortName evidence="1">URO-D</shortName>
        <ecNumber evidence="1">4.1.1.37</ecNumber>
    </recommendedName>
</protein>
<organism>
    <name type="scientific">Ruegeria pomeroyi (strain ATCC 700808 / DSM 15171 / DSS-3)</name>
    <name type="common">Silicibacter pomeroyi</name>
    <dbReference type="NCBI Taxonomy" id="246200"/>
    <lineage>
        <taxon>Bacteria</taxon>
        <taxon>Pseudomonadati</taxon>
        <taxon>Pseudomonadota</taxon>
        <taxon>Alphaproteobacteria</taxon>
        <taxon>Rhodobacterales</taxon>
        <taxon>Roseobacteraceae</taxon>
        <taxon>Ruegeria</taxon>
    </lineage>
</organism>